<sequence length="202" mass="22622">MRNFVIIAHKALTTGDFSLNDLPGSAGRMDILCRCINSCLFLSHDLRRDVQVHLLLLGEPEPGKIIRFDSEHVRYLNPDERSAGSLIKKALQKTAGEYEVRSTPGVFIRSGNLGTLLNEFKDAGRRLIYLHEDGEDIRELSDLTNNAVFILGDHMGVTEEEEQLIKEHEAKTISLGPIPLHADHCIILINNEIDRNLSGKSQ</sequence>
<gene>
    <name evidence="1" type="primary">trmY</name>
    <name type="ordered locus">Mbur_0907</name>
</gene>
<reference key="1">
    <citation type="journal article" date="2009" name="ISME J.">
        <title>The genome sequence of the psychrophilic archaeon, Methanococcoides burtonii: the role of genome evolution in cold adaptation.</title>
        <authorList>
            <person name="Allen M.A."/>
            <person name="Lauro F.M."/>
            <person name="Williams T.J."/>
            <person name="Burg D."/>
            <person name="Siddiqui K.S."/>
            <person name="De Francisci D."/>
            <person name="Chong K.W."/>
            <person name="Pilak O."/>
            <person name="Chew H.H."/>
            <person name="De Maere M.Z."/>
            <person name="Ting L."/>
            <person name="Katrib M."/>
            <person name="Ng C."/>
            <person name="Sowers K.R."/>
            <person name="Galperin M.Y."/>
            <person name="Anderson I.J."/>
            <person name="Ivanova N."/>
            <person name="Dalin E."/>
            <person name="Martinez M."/>
            <person name="Lapidus A."/>
            <person name="Hauser L."/>
            <person name="Land M."/>
            <person name="Thomas T."/>
            <person name="Cavicchioli R."/>
        </authorList>
    </citation>
    <scope>NUCLEOTIDE SEQUENCE [LARGE SCALE GENOMIC DNA]</scope>
    <source>
        <strain>DSM 6242 / NBRC 107633 / OCM 468 / ACE-M</strain>
    </source>
</reference>
<name>TRMY_METBU</name>
<dbReference type="EC" id="2.1.1.257" evidence="1"/>
<dbReference type="EMBL" id="CP000300">
    <property type="protein sequence ID" value="ABE51854.1"/>
    <property type="molecule type" value="Genomic_DNA"/>
</dbReference>
<dbReference type="RefSeq" id="WP_011499007.1">
    <property type="nucleotide sequence ID" value="NC_007955.1"/>
</dbReference>
<dbReference type="SMR" id="Q12XH2"/>
<dbReference type="STRING" id="259564.Mbur_0907"/>
<dbReference type="GeneID" id="3998651"/>
<dbReference type="KEGG" id="mbu:Mbur_0907"/>
<dbReference type="HOGENOM" id="CLU_107018_0_0_2"/>
<dbReference type="OrthoDB" id="27492at2157"/>
<dbReference type="Proteomes" id="UP000001979">
    <property type="component" value="Chromosome"/>
</dbReference>
<dbReference type="GO" id="GO:0005737">
    <property type="term" value="C:cytoplasm"/>
    <property type="evidence" value="ECO:0007669"/>
    <property type="project" value="UniProtKB-SubCell"/>
</dbReference>
<dbReference type="GO" id="GO:0008757">
    <property type="term" value="F:S-adenosylmethionine-dependent methyltransferase activity"/>
    <property type="evidence" value="ECO:0007669"/>
    <property type="project" value="UniProtKB-UniRule"/>
</dbReference>
<dbReference type="GO" id="GO:0008175">
    <property type="term" value="F:tRNA methyltransferase activity"/>
    <property type="evidence" value="ECO:0007669"/>
    <property type="project" value="UniProtKB-UniRule"/>
</dbReference>
<dbReference type="GO" id="GO:0030488">
    <property type="term" value="P:tRNA methylation"/>
    <property type="evidence" value="ECO:0007669"/>
    <property type="project" value="UniProtKB-UniRule"/>
</dbReference>
<dbReference type="CDD" id="cd18087">
    <property type="entry name" value="TrmY-like"/>
    <property type="match status" value="1"/>
</dbReference>
<dbReference type="Gene3D" id="3.40.1280.10">
    <property type="match status" value="1"/>
</dbReference>
<dbReference type="HAMAP" id="MF_00587">
    <property type="entry name" value="tRNA_methyltr_TrmY"/>
    <property type="match status" value="1"/>
</dbReference>
<dbReference type="InterPro" id="IPR029028">
    <property type="entry name" value="Alpha/beta_knot_MTases"/>
</dbReference>
<dbReference type="InterPro" id="IPR007158">
    <property type="entry name" value="TrmY"/>
</dbReference>
<dbReference type="InterPro" id="IPR029026">
    <property type="entry name" value="tRNA_m1G_MTases_N"/>
</dbReference>
<dbReference type="NCBIfam" id="NF002560">
    <property type="entry name" value="PRK02135.1"/>
    <property type="match status" value="1"/>
</dbReference>
<dbReference type="PANTHER" id="PTHR40703">
    <property type="entry name" value="TRNA (PSEUDOURIDINE(54)-N(1))-METHYLTRANSFERASE"/>
    <property type="match status" value="1"/>
</dbReference>
<dbReference type="PANTHER" id="PTHR40703:SF1">
    <property type="entry name" value="TRNA (PSEUDOURIDINE(54)-N(1))-METHYLTRANSFERASE"/>
    <property type="match status" value="1"/>
</dbReference>
<dbReference type="Pfam" id="PF04013">
    <property type="entry name" value="Methyltrn_RNA_2"/>
    <property type="match status" value="1"/>
</dbReference>
<dbReference type="SUPFAM" id="SSF75217">
    <property type="entry name" value="alpha/beta knot"/>
    <property type="match status" value="1"/>
</dbReference>
<keyword id="KW-0963">Cytoplasm</keyword>
<keyword id="KW-0489">Methyltransferase</keyword>
<keyword id="KW-0949">S-adenosyl-L-methionine</keyword>
<keyword id="KW-0808">Transferase</keyword>
<keyword id="KW-0819">tRNA processing</keyword>
<proteinExistence type="inferred from homology"/>
<feature type="chain" id="PRO_1000025465" description="tRNA (pseudouridine(54)-N(1))-methyltransferase">
    <location>
        <begin position="1"/>
        <end position="202"/>
    </location>
</feature>
<feature type="binding site" evidence="1">
    <location>
        <position position="130"/>
    </location>
    <ligand>
        <name>S-adenosyl-L-methionine</name>
        <dbReference type="ChEBI" id="CHEBI:59789"/>
    </ligand>
</feature>
<feature type="binding site" evidence="1">
    <location>
        <position position="152"/>
    </location>
    <ligand>
        <name>S-adenosyl-L-methionine</name>
        <dbReference type="ChEBI" id="CHEBI:59789"/>
    </ligand>
</feature>
<feature type="binding site" evidence="1">
    <location>
        <position position="185"/>
    </location>
    <ligand>
        <name>S-adenosyl-L-methionine</name>
        <dbReference type="ChEBI" id="CHEBI:59789"/>
    </ligand>
</feature>
<accession>Q12XH2</accession>
<protein>
    <recommendedName>
        <fullName evidence="1">tRNA (pseudouridine(54)-N(1))-methyltransferase</fullName>
        <ecNumber evidence="1">2.1.1.257</ecNumber>
    </recommendedName>
</protein>
<organism>
    <name type="scientific">Methanococcoides burtonii (strain DSM 6242 / NBRC 107633 / OCM 468 / ACE-M)</name>
    <dbReference type="NCBI Taxonomy" id="259564"/>
    <lineage>
        <taxon>Archaea</taxon>
        <taxon>Methanobacteriati</taxon>
        <taxon>Methanobacteriota</taxon>
        <taxon>Stenosarchaea group</taxon>
        <taxon>Methanomicrobia</taxon>
        <taxon>Methanosarcinales</taxon>
        <taxon>Methanosarcinaceae</taxon>
        <taxon>Methanococcoides</taxon>
    </lineage>
</organism>
<evidence type="ECO:0000255" key="1">
    <source>
        <dbReference type="HAMAP-Rule" id="MF_00587"/>
    </source>
</evidence>
<comment type="function">
    <text evidence="1">Specifically catalyzes the N1-methylation of pseudouridine at position 54 (Psi54) in tRNAs.</text>
</comment>
<comment type="catalytic activity">
    <reaction evidence="1">
        <text>pseudouridine(54) in tRNA + S-adenosyl-L-methionine = N(1)-methylpseudouridine(54) in tRNA + S-adenosyl-L-homocysteine + H(+)</text>
        <dbReference type="Rhea" id="RHEA:55292"/>
        <dbReference type="Rhea" id="RHEA-COMP:14140"/>
        <dbReference type="Rhea" id="RHEA-COMP:14141"/>
        <dbReference type="ChEBI" id="CHEBI:15378"/>
        <dbReference type="ChEBI" id="CHEBI:57856"/>
        <dbReference type="ChEBI" id="CHEBI:59789"/>
        <dbReference type="ChEBI" id="CHEBI:65314"/>
        <dbReference type="ChEBI" id="CHEBI:74890"/>
        <dbReference type="EC" id="2.1.1.257"/>
    </reaction>
</comment>
<comment type="subunit">
    <text evidence="1">Homodimer.</text>
</comment>
<comment type="subcellular location">
    <subcellularLocation>
        <location evidence="1">Cytoplasm</location>
    </subcellularLocation>
</comment>
<comment type="similarity">
    <text evidence="1">Belongs to the methyltransferase superfamily. TrmY family.</text>
</comment>